<reference key="1">
    <citation type="journal article" date="2009" name="Environ. Microbiol.">
        <title>The genome of Polaromonas naphthalenivorans strain CJ2, isolated from coal tar-contaminated sediment, reveals physiological and metabolic versatility and evolution through extensive horizontal gene transfer.</title>
        <authorList>
            <person name="Yagi J.M."/>
            <person name="Sims D."/>
            <person name="Brettin T."/>
            <person name="Bruce D."/>
            <person name="Madsen E.L."/>
        </authorList>
    </citation>
    <scope>NUCLEOTIDE SEQUENCE [LARGE SCALE GENOMIC DNA]</scope>
    <source>
        <strain>CJ2</strain>
    </source>
</reference>
<accession>A1VUV2</accession>
<organism>
    <name type="scientific">Polaromonas naphthalenivorans (strain CJ2)</name>
    <dbReference type="NCBI Taxonomy" id="365044"/>
    <lineage>
        <taxon>Bacteria</taxon>
        <taxon>Pseudomonadati</taxon>
        <taxon>Pseudomonadota</taxon>
        <taxon>Betaproteobacteria</taxon>
        <taxon>Burkholderiales</taxon>
        <taxon>Comamonadaceae</taxon>
        <taxon>Polaromonas</taxon>
    </lineage>
</organism>
<name>ACDH_POLNA</name>
<feature type="chain" id="PRO_0000387703" description="Acetaldehyde dehydrogenase">
    <location>
        <begin position="1"/>
        <end position="304"/>
    </location>
</feature>
<feature type="active site" description="Acyl-thioester intermediate" evidence="1">
    <location>
        <position position="131"/>
    </location>
</feature>
<feature type="binding site" evidence="1">
    <location>
        <begin position="162"/>
        <end position="170"/>
    </location>
    <ligand>
        <name>NAD(+)</name>
        <dbReference type="ChEBI" id="CHEBI:57540"/>
    </ligand>
</feature>
<feature type="binding site" evidence="1">
    <location>
        <position position="273"/>
    </location>
    <ligand>
        <name>NAD(+)</name>
        <dbReference type="ChEBI" id="CHEBI:57540"/>
    </ligand>
</feature>
<proteinExistence type="inferred from homology"/>
<protein>
    <recommendedName>
        <fullName evidence="1">Acetaldehyde dehydrogenase</fullName>
        <ecNumber evidence="1">1.2.1.10</ecNumber>
    </recommendedName>
    <alternativeName>
        <fullName evidence="1">Acetaldehyde dehydrogenase [acetylating]</fullName>
    </alternativeName>
</protein>
<gene>
    <name type="ordered locus">Pnap_4143</name>
</gene>
<keyword id="KW-0058">Aromatic hydrocarbons catabolism</keyword>
<keyword id="KW-0520">NAD</keyword>
<keyword id="KW-0560">Oxidoreductase</keyword>
<keyword id="KW-0614">Plasmid</keyword>
<keyword id="KW-1185">Reference proteome</keyword>
<comment type="catalytic activity">
    <reaction evidence="1">
        <text>acetaldehyde + NAD(+) + CoA = acetyl-CoA + NADH + H(+)</text>
        <dbReference type="Rhea" id="RHEA:23288"/>
        <dbReference type="ChEBI" id="CHEBI:15343"/>
        <dbReference type="ChEBI" id="CHEBI:15378"/>
        <dbReference type="ChEBI" id="CHEBI:57287"/>
        <dbReference type="ChEBI" id="CHEBI:57288"/>
        <dbReference type="ChEBI" id="CHEBI:57540"/>
        <dbReference type="ChEBI" id="CHEBI:57945"/>
        <dbReference type="EC" id="1.2.1.10"/>
    </reaction>
</comment>
<comment type="similarity">
    <text evidence="1">Belongs to the acetaldehyde dehydrogenase family.</text>
</comment>
<evidence type="ECO:0000255" key="1">
    <source>
        <dbReference type="HAMAP-Rule" id="MF_01657"/>
    </source>
</evidence>
<geneLocation type="plasmid">
    <name>pPNAP01</name>
</geneLocation>
<dbReference type="EC" id="1.2.1.10" evidence="1"/>
<dbReference type="EMBL" id="CP000530">
    <property type="protein sequence ID" value="ABM39430.1"/>
    <property type="molecule type" value="Genomic_DNA"/>
</dbReference>
<dbReference type="SMR" id="A1VUV2"/>
<dbReference type="KEGG" id="pna:Pnap_4143"/>
<dbReference type="HOGENOM" id="CLU_062208_0_0_4"/>
<dbReference type="OrthoDB" id="9786743at2"/>
<dbReference type="Proteomes" id="UP000000644">
    <property type="component" value="Plasmid pPNAP01"/>
</dbReference>
<dbReference type="GO" id="GO:0008774">
    <property type="term" value="F:acetaldehyde dehydrogenase (acetylating) activity"/>
    <property type="evidence" value="ECO:0007669"/>
    <property type="project" value="UniProtKB-UniRule"/>
</dbReference>
<dbReference type="GO" id="GO:0051287">
    <property type="term" value="F:NAD binding"/>
    <property type="evidence" value="ECO:0007669"/>
    <property type="project" value="UniProtKB-UniRule"/>
</dbReference>
<dbReference type="GO" id="GO:0009056">
    <property type="term" value="P:catabolic process"/>
    <property type="evidence" value="ECO:0007669"/>
    <property type="project" value="UniProtKB-KW"/>
</dbReference>
<dbReference type="CDD" id="cd23933">
    <property type="entry name" value="ALDH_C"/>
    <property type="match status" value="1"/>
</dbReference>
<dbReference type="Gene3D" id="3.30.360.10">
    <property type="entry name" value="Dihydrodipicolinate Reductase, domain 2"/>
    <property type="match status" value="1"/>
</dbReference>
<dbReference type="Gene3D" id="3.40.50.720">
    <property type="entry name" value="NAD(P)-binding Rossmann-like Domain"/>
    <property type="match status" value="1"/>
</dbReference>
<dbReference type="HAMAP" id="MF_01657">
    <property type="entry name" value="Ac_ald_DH_ac"/>
    <property type="match status" value="1"/>
</dbReference>
<dbReference type="InterPro" id="IPR003361">
    <property type="entry name" value="Acetaldehyde_dehydrogenase"/>
</dbReference>
<dbReference type="InterPro" id="IPR015426">
    <property type="entry name" value="Acetylaldehyde_DH_C"/>
</dbReference>
<dbReference type="InterPro" id="IPR036291">
    <property type="entry name" value="NAD(P)-bd_dom_sf"/>
</dbReference>
<dbReference type="InterPro" id="IPR000534">
    <property type="entry name" value="Semialdehyde_DH_NAD-bd"/>
</dbReference>
<dbReference type="NCBIfam" id="TIGR03215">
    <property type="entry name" value="ac_ald_DH_ac"/>
    <property type="match status" value="1"/>
</dbReference>
<dbReference type="NCBIfam" id="NF006157">
    <property type="entry name" value="PRK08300.1"/>
    <property type="match status" value="1"/>
</dbReference>
<dbReference type="Pfam" id="PF09290">
    <property type="entry name" value="AcetDehyd-dimer"/>
    <property type="match status" value="1"/>
</dbReference>
<dbReference type="PIRSF" id="PIRSF015689">
    <property type="entry name" value="Actaldh_dh_actl"/>
    <property type="match status" value="1"/>
</dbReference>
<dbReference type="SMART" id="SM00859">
    <property type="entry name" value="Semialdhyde_dh"/>
    <property type="match status" value="1"/>
</dbReference>
<dbReference type="SUPFAM" id="SSF55347">
    <property type="entry name" value="Glyceraldehyde-3-phosphate dehydrogenase-like, C-terminal domain"/>
    <property type="match status" value="1"/>
</dbReference>
<dbReference type="SUPFAM" id="SSF51735">
    <property type="entry name" value="NAD(P)-binding Rossmann-fold domains"/>
    <property type="match status" value="1"/>
</dbReference>
<sequence length="304" mass="32279">MTKKIKCALIGPGNIGTDLLAKLQRSAVLEPVWMVGIDPESDGLKRAREMGIKTTADGVDGLIPHMQADGVQIVFDATSAYVHAENSRKVNAQGALMIDLTPAAIGPFCVPPVNLIEHVGKGEMNVNMVTCGGQATIPMVAAVSRVQPVAYGEIIATVSSKSAGPGTRKNIDEFTRTTASAVEKVGGAKKGKAIIILNPAEPPLIMRDTVHCLLESEPDQAKITESIHAMIQEVQKYVPGYKLVNGPVFDGKRVSVFLEVEGLGDYLPKYAGNLDIMTAAAARTAEMFAEEILAGRLTLKPVHA</sequence>